<accession>Q07060</accession>
<protein>
    <recommendedName>
        <fullName>ATP synthase subunit 9, mitochondrial</fullName>
    </recommendedName>
    <alternativeName>
        <fullName>Lipid-binding protein</fullName>
    </alternativeName>
</protein>
<dbReference type="EMBL" id="Y00609">
    <property type="protein sequence ID" value="CAA68651.1"/>
    <property type="molecule type" value="mRNA"/>
</dbReference>
<dbReference type="SMR" id="Q07060"/>
<dbReference type="GO" id="GO:0031966">
    <property type="term" value="C:mitochondrial membrane"/>
    <property type="evidence" value="ECO:0007669"/>
    <property type="project" value="UniProtKB-SubCell"/>
</dbReference>
<dbReference type="GO" id="GO:0045259">
    <property type="term" value="C:proton-transporting ATP synthase complex"/>
    <property type="evidence" value="ECO:0007669"/>
    <property type="project" value="UniProtKB-KW"/>
</dbReference>
<dbReference type="GO" id="GO:0033177">
    <property type="term" value="C:proton-transporting two-sector ATPase complex, proton-transporting domain"/>
    <property type="evidence" value="ECO:0007669"/>
    <property type="project" value="InterPro"/>
</dbReference>
<dbReference type="GO" id="GO:0005524">
    <property type="term" value="F:ATP binding"/>
    <property type="evidence" value="ECO:0007669"/>
    <property type="project" value="UniProtKB-KW"/>
</dbReference>
<dbReference type="GO" id="GO:0008289">
    <property type="term" value="F:lipid binding"/>
    <property type="evidence" value="ECO:0007669"/>
    <property type="project" value="UniProtKB-KW"/>
</dbReference>
<dbReference type="GO" id="GO:0015078">
    <property type="term" value="F:proton transmembrane transporter activity"/>
    <property type="evidence" value="ECO:0007669"/>
    <property type="project" value="InterPro"/>
</dbReference>
<dbReference type="GO" id="GO:0015986">
    <property type="term" value="P:proton motive force-driven ATP synthesis"/>
    <property type="evidence" value="ECO:0007669"/>
    <property type="project" value="InterPro"/>
</dbReference>
<dbReference type="CDD" id="cd18182">
    <property type="entry name" value="ATP-synt_Fo_c_ATP5G3"/>
    <property type="match status" value="1"/>
</dbReference>
<dbReference type="FunFam" id="1.20.20.10:FF:000005">
    <property type="entry name" value="ATP synthase subunit 9, mitochondrial"/>
    <property type="match status" value="1"/>
</dbReference>
<dbReference type="Gene3D" id="1.20.20.10">
    <property type="entry name" value="F1F0 ATP synthase subunit C"/>
    <property type="match status" value="1"/>
</dbReference>
<dbReference type="HAMAP" id="MF_01396">
    <property type="entry name" value="ATP_synth_c_bact"/>
    <property type="match status" value="1"/>
</dbReference>
<dbReference type="InterPro" id="IPR000454">
    <property type="entry name" value="ATP_synth_F0_csu"/>
</dbReference>
<dbReference type="InterPro" id="IPR020537">
    <property type="entry name" value="ATP_synth_F0_csu_DDCD_BS"/>
</dbReference>
<dbReference type="InterPro" id="IPR038662">
    <property type="entry name" value="ATP_synth_F0_csu_sf"/>
</dbReference>
<dbReference type="InterPro" id="IPR002379">
    <property type="entry name" value="ATPase_proteolipid_c-like_dom"/>
</dbReference>
<dbReference type="InterPro" id="IPR035921">
    <property type="entry name" value="F/V-ATP_Csub_sf"/>
</dbReference>
<dbReference type="PANTHER" id="PTHR10031">
    <property type="entry name" value="ATP SYNTHASE LIPID-BINDING PROTEIN, MITOCHONDRIAL"/>
    <property type="match status" value="1"/>
</dbReference>
<dbReference type="PANTHER" id="PTHR10031:SF57">
    <property type="entry name" value="ATP SYNTHASE SUBUNIT 9, MITOCHONDRIAL"/>
    <property type="match status" value="1"/>
</dbReference>
<dbReference type="Pfam" id="PF00137">
    <property type="entry name" value="ATP-synt_C"/>
    <property type="match status" value="1"/>
</dbReference>
<dbReference type="PRINTS" id="PR00124">
    <property type="entry name" value="ATPASEC"/>
</dbReference>
<dbReference type="SUPFAM" id="SSF81333">
    <property type="entry name" value="F1F0 ATP synthase subunit C"/>
    <property type="match status" value="1"/>
</dbReference>
<dbReference type="PROSITE" id="PS00605">
    <property type="entry name" value="ATPASE_C"/>
    <property type="match status" value="1"/>
</dbReference>
<reference key="1">
    <citation type="journal article" date="1988" name="Genetics">
        <title>A functional mitochondrial ATP synthase proteolipid gene produced by recombination of parental genes in a petunia somatic hybrid.</title>
        <authorList>
            <person name="Rothenburg M."/>
            <person name="Hanson R."/>
        </authorList>
    </citation>
    <scope>NUCLEOTIDE SEQUENCE [MRNA]</scope>
</reference>
<evidence type="ECO:0000250" key="1"/>
<evidence type="ECO:0000305" key="2"/>
<proteinExistence type="inferred from homology"/>
<gene>
    <name type="primary">ATP9</name>
</gene>
<sequence length="77" mass="7794">MLEGAKSMGAGAATNASAGAAIGIGNVLSSSIHSVARNPSLAKQLFGYAILGFALTEANASFAPMMAFLISFVFQVR</sequence>
<geneLocation type="mitochondrion"/>
<keyword id="KW-0067">ATP-binding</keyword>
<keyword id="KW-0138">CF(0)</keyword>
<keyword id="KW-0375">Hydrogen ion transport</keyword>
<keyword id="KW-0406">Ion transport</keyword>
<keyword id="KW-0446">Lipid-binding</keyword>
<keyword id="KW-0472">Membrane</keyword>
<keyword id="KW-0496">Mitochondrion</keyword>
<keyword id="KW-0547">Nucleotide-binding</keyword>
<keyword id="KW-0812">Transmembrane</keyword>
<keyword id="KW-1133">Transmembrane helix</keyword>
<keyword id="KW-0813">Transport</keyword>
<name>ATP9_PETSP</name>
<feature type="chain" id="PRO_0000112221" description="ATP synthase subunit 9, mitochondrial">
    <location>
        <begin position="1"/>
        <end position="77"/>
    </location>
</feature>
<feature type="transmembrane region" description="Helical" evidence="1">
    <location>
        <begin position="8"/>
        <end position="28"/>
    </location>
</feature>
<feature type="transmembrane region" description="Helical" evidence="1">
    <location>
        <begin position="45"/>
        <end position="72"/>
    </location>
</feature>
<feature type="site" description="Reversibly protonated during proton transport" evidence="1">
    <location>
        <position position="57"/>
    </location>
</feature>
<comment type="function">
    <text>This protein is one of the chains of the nonenzymatic membrane component (F0) of mitochondrial ATPase.</text>
</comment>
<comment type="subunit">
    <text>F-type ATPases have 2 components, CF(1) - the catalytic core - and CF(0) - the membrane proton channel. CF(1) has five subunits: alpha(3), beta(3), gamma(1), delta(1), epsilon(1). CF(0) has three main subunits: a, b and c.</text>
</comment>
<comment type="subcellular location">
    <subcellularLocation>
        <location evidence="2">Mitochondrion membrane</location>
        <topology evidence="2">Multi-pass membrane protein</topology>
    </subcellularLocation>
</comment>
<comment type="similarity">
    <text evidence="2">Belongs to the ATPase C chain family.</text>
</comment>
<organism>
    <name type="scientific">Petunia sp.</name>
    <name type="common">Petunia</name>
    <dbReference type="NCBI Taxonomy" id="4104"/>
    <lineage>
        <taxon>Eukaryota</taxon>
        <taxon>Viridiplantae</taxon>
        <taxon>Streptophyta</taxon>
        <taxon>Embryophyta</taxon>
        <taxon>Tracheophyta</taxon>
        <taxon>Spermatophyta</taxon>
        <taxon>Magnoliopsida</taxon>
        <taxon>eudicotyledons</taxon>
        <taxon>Gunneridae</taxon>
        <taxon>Pentapetalae</taxon>
        <taxon>asterids</taxon>
        <taxon>lamiids</taxon>
        <taxon>Solanales</taxon>
        <taxon>Solanaceae</taxon>
        <taxon>Petunioideae</taxon>
        <taxon>Petunia</taxon>
    </lineage>
</organism>